<accession>A0KJJ0</accession>
<keyword id="KW-1185">Reference proteome</keyword>
<keyword id="KW-0687">Ribonucleoprotein</keyword>
<keyword id="KW-0689">Ribosomal protein</keyword>
<gene>
    <name evidence="1" type="primary">rpmJ</name>
    <name type="ordered locus">AHA_1910</name>
</gene>
<proteinExistence type="inferred from homology"/>
<feature type="chain" id="PRO_0000302148" description="Large ribosomal subunit protein bL36">
    <location>
        <begin position="1"/>
        <end position="41"/>
    </location>
</feature>
<sequence length="41" mass="4827">MKVLSSLKSAKSRHPDCQIVRRRGKLFVICKSNPRFKARQR</sequence>
<name>RL36_AERHH</name>
<comment type="similarity">
    <text evidence="1">Belongs to the bacterial ribosomal protein bL36 family.</text>
</comment>
<protein>
    <recommendedName>
        <fullName evidence="1">Large ribosomal subunit protein bL36</fullName>
    </recommendedName>
    <alternativeName>
        <fullName evidence="2">50S ribosomal protein L36</fullName>
    </alternativeName>
</protein>
<reference key="1">
    <citation type="journal article" date="2006" name="J. Bacteriol.">
        <title>Genome sequence of Aeromonas hydrophila ATCC 7966T: jack of all trades.</title>
        <authorList>
            <person name="Seshadri R."/>
            <person name="Joseph S.W."/>
            <person name="Chopra A.K."/>
            <person name="Sha J."/>
            <person name="Shaw J."/>
            <person name="Graf J."/>
            <person name="Haft D.H."/>
            <person name="Wu M."/>
            <person name="Ren Q."/>
            <person name="Rosovitz M.J."/>
            <person name="Madupu R."/>
            <person name="Tallon L."/>
            <person name="Kim M."/>
            <person name="Jin S."/>
            <person name="Vuong H."/>
            <person name="Stine O.C."/>
            <person name="Ali A."/>
            <person name="Horneman A.J."/>
            <person name="Heidelberg J.F."/>
        </authorList>
    </citation>
    <scope>NUCLEOTIDE SEQUENCE [LARGE SCALE GENOMIC DNA]</scope>
    <source>
        <strain>ATCC 7966 / DSM 30187 / BCRC 13018 / CCUG 14551 / JCM 1027 / KCTC 2358 / NCIMB 9240 / NCTC 8049</strain>
    </source>
</reference>
<evidence type="ECO:0000255" key="1">
    <source>
        <dbReference type="HAMAP-Rule" id="MF_00251"/>
    </source>
</evidence>
<evidence type="ECO:0000305" key="2"/>
<organism>
    <name type="scientific">Aeromonas hydrophila subsp. hydrophila (strain ATCC 7966 / DSM 30187 / BCRC 13018 / CCUG 14551 / JCM 1027 / KCTC 2358 / NCIMB 9240 / NCTC 8049)</name>
    <dbReference type="NCBI Taxonomy" id="380703"/>
    <lineage>
        <taxon>Bacteria</taxon>
        <taxon>Pseudomonadati</taxon>
        <taxon>Pseudomonadota</taxon>
        <taxon>Gammaproteobacteria</taxon>
        <taxon>Aeromonadales</taxon>
        <taxon>Aeromonadaceae</taxon>
        <taxon>Aeromonas</taxon>
    </lineage>
</organism>
<dbReference type="EMBL" id="CP000462">
    <property type="protein sequence ID" value="ABK35984.1"/>
    <property type="molecule type" value="Genomic_DNA"/>
</dbReference>
<dbReference type="RefSeq" id="YP_856441.1">
    <property type="nucleotide sequence ID" value="NC_008570.1"/>
</dbReference>
<dbReference type="SMR" id="A0KJJ0"/>
<dbReference type="STRING" id="380703.AHA_1910"/>
<dbReference type="EnsemblBacteria" id="ABK35984">
    <property type="protein sequence ID" value="ABK35984"/>
    <property type="gene ID" value="AHA_1910"/>
</dbReference>
<dbReference type="KEGG" id="aha:AHA_1910"/>
<dbReference type="PATRIC" id="fig|380703.7.peg.1924"/>
<dbReference type="eggNOG" id="COG0257">
    <property type="taxonomic scope" value="Bacteria"/>
</dbReference>
<dbReference type="HOGENOM" id="CLU_135723_3_3_6"/>
<dbReference type="OrthoDB" id="9801558at2"/>
<dbReference type="PRO" id="PR:A0KJJ0"/>
<dbReference type="Proteomes" id="UP000000756">
    <property type="component" value="Chromosome"/>
</dbReference>
<dbReference type="GO" id="GO:1990904">
    <property type="term" value="C:ribonucleoprotein complex"/>
    <property type="evidence" value="ECO:0007669"/>
    <property type="project" value="UniProtKB-KW"/>
</dbReference>
<dbReference type="GO" id="GO:0005840">
    <property type="term" value="C:ribosome"/>
    <property type="evidence" value="ECO:0007669"/>
    <property type="project" value="UniProtKB-KW"/>
</dbReference>
<dbReference type="GO" id="GO:0003735">
    <property type="term" value="F:structural constituent of ribosome"/>
    <property type="evidence" value="ECO:0007669"/>
    <property type="project" value="InterPro"/>
</dbReference>
<dbReference type="GO" id="GO:0006412">
    <property type="term" value="P:translation"/>
    <property type="evidence" value="ECO:0007669"/>
    <property type="project" value="UniProtKB-UniRule"/>
</dbReference>
<dbReference type="HAMAP" id="MF_00251">
    <property type="entry name" value="Ribosomal_bL36"/>
    <property type="match status" value="1"/>
</dbReference>
<dbReference type="InterPro" id="IPR000473">
    <property type="entry name" value="Ribosomal_bL36"/>
</dbReference>
<dbReference type="InterPro" id="IPR035977">
    <property type="entry name" value="Ribosomal_bL36_sp"/>
</dbReference>
<dbReference type="InterPro" id="IPR047621">
    <property type="entry name" value="Ribosomal_L36_bact"/>
</dbReference>
<dbReference type="NCBIfam" id="NF002021">
    <property type="entry name" value="PRK00831.1"/>
    <property type="match status" value="1"/>
</dbReference>
<dbReference type="NCBIfam" id="TIGR01022">
    <property type="entry name" value="rpmJ_bact"/>
    <property type="match status" value="1"/>
</dbReference>
<dbReference type="PANTHER" id="PTHR47781">
    <property type="entry name" value="50S RIBOSOMAL PROTEIN L36 2"/>
    <property type="match status" value="1"/>
</dbReference>
<dbReference type="PANTHER" id="PTHR47781:SF1">
    <property type="entry name" value="LARGE RIBOSOMAL SUBUNIT PROTEIN BL36B"/>
    <property type="match status" value="1"/>
</dbReference>
<dbReference type="Pfam" id="PF00444">
    <property type="entry name" value="Ribosomal_L36"/>
    <property type="match status" value="1"/>
</dbReference>
<dbReference type="SUPFAM" id="SSF57840">
    <property type="entry name" value="Ribosomal protein L36"/>
    <property type="match status" value="1"/>
</dbReference>
<dbReference type="PROSITE" id="PS00828">
    <property type="entry name" value="RIBOSOMAL_L36"/>
    <property type="match status" value="1"/>
</dbReference>